<protein>
    <recommendedName>
        <fullName evidence="1">Recombination protein RecR</fullName>
    </recommendedName>
</protein>
<dbReference type="EMBL" id="CP000246">
    <property type="protein sequence ID" value="ABG84861.1"/>
    <property type="molecule type" value="Genomic_DNA"/>
</dbReference>
<dbReference type="RefSeq" id="WP_003450875.1">
    <property type="nucleotide sequence ID" value="NC_008261.1"/>
</dbReference>
<dbReference type="SMR" id="Q0TV20"/>
<dbReference type="STRING" id="195103.CPF_0054"/>
<dbReference type="PaxDb" id="195103-CPF_0054"/>
<dbReference type="GeneID" id="93000667"/>
<dbReference type="KEGG" id="cpf:CPF_0054"/>
<dbReference type="eggNOG" id="COG0353">
    <property type="taxonomic scope" value="Bacteria"/>
</dbReference>
<dbReference type="HOGENOM" id="CLU_060739_1_0_9"/>
<dbReference type="Proteomes" id="UP000001823">
    <property type="component" value="Chromosome"/>
</dbReference>
<dbReference type="GO" id="GO:0003677">
    <property type="term" value="F:DNA binding"/>
    <property type="evidence" value="ECO:0007669"/>
    <property type="project" value="UniProtKB-UniRule"/>
</dbReference>
<dbReference type="GO" id="GO:0008270">
    <property type="term" value="F:zinc ion binding"/>
    <property type="evidence" value="ECO:0007669"/>
    <property type="project" value="UniProtKB-KW"/>
</dbReference>
<dbReference type="GO" id="GO:0006310">
    <property type="term" value="P:DNA recombination"/>
    <property type="evidence" value="ECO:0007669"/>
    <property type="project" value="UniProtKB-UniRule"/>
</dbReference>
<dbReference type="GO" id="GO:0006281">
    <property type="term" value="P:DNA repair"/>
    <property type="evidence" value="ECO:0007669"/>
    <property type="project" value="UniProtKB-UniRule"/>
</dbReference>
<dbReference type="CDD" id="cd01025">
    <property type="entry name" value="TOPRIM_recR"/>
    <property type="match status" value="1"/>
</dbReference>
<dbReference type="Gene3D" id="3.30.60.80">
    <property type="match status" value="1"/>
</dbReference>
<dbReference type="Gene3D" id="3.40.1360.10">
    <property type="match status" value="1"/>
</dbReference>
<dbReference type="Gene3D" id="6.10.250.240">
    <property type="match status" value="1"/>
</dbReference>
<dbReference type="Gene3D" id="1.10.8.420">
    <property type="entry name" value="RecR Domain 1"/>
    <property type="match status" value="1"/>
</dbReference>
<dbReference type="HAMAP" id="MF_00017">
    <property type="entry name" value="RecR"/>
    <property type="match status" value="1"/>
</dbReference>
<dbReference type="InterPro" id="IPR000093">
    <property type="entry name" value="DNA_Rcmb_RecR"/>
</dbReference>
<dbReference type="InterPro" id="IPR023627">
    <property type="entry name" value="Rcmb_RecR"/>
</dbReference>
<dbReference type="InterPro" id="IPR015967">
    <property type="entry name" value="Rcmb_RecR_Znf"/>
</dbReference>
<dbReference type="InterPro" id="IPR006171">
    <property type="entry name" value="TOPRIM_dom"/>
</dbReference>
<dbReference type="InterPro" id="IPR034137">
    <property type="entry name" value="TOPRIM_RecR"/>
</dbReference>
<dbReference type="NCBIfam" id="TIGR00615">
    <property type="entry name" value="recR"/>
    <property type="match status" value="1"/>
</dbReference>
<dbReference type="PANTHER" id="PTHR30446">
    <property type="entry name" value="RECOMBINATION PROTEIN RECR"/>
    <property type="match status" value="1"/>
</dbReference>
<dbReference type="PANTHER" id="PTHR30446:SF0">
    <property type="entry name" value="RECOMBINATION PROTEIN RECR"/>
    <property type="match status" value="1"/>
</dbReference>
<dbReference type="Pfam" id="PF21175">
    <property type="entry name" value="RecR_C"/>
    <property type="match status" value="1"/>
</dbReference>
<dbReference type="Pfam" id="PF21176">
    <property type="entry name" value="RecR_HhH"/>
    <property type="match status" value="1"/>
</dbReference>
<dbReference type="Pfam" id="PF02132">
    <property type="entry name" value="RecR_ZnF"/>
    <property type="match status" value="1"/>
</dbReference>
<dbReference type="Pfam" id="PF13662">
    <property type="entry name" value="Toprim_4"/>
    <property type="match status" value="1"/>
</dbReference>
<dbReference type="SMART" id="SM00493">
    <property type="entry name" value="TOPRIM"/>
    <property type="match status" value="1"/>
</dbReference>
<dbReference type="SUPFAM" id="SSF111304">
    <property type="entry name" value="Recombination protein RecR"/>
    <property type="match status" value="1"/>
</dbReference>
<dbReference type="PROSITE" id="PS50880">
    <property type="entry name" value="TOPRIM"/>
    <property type="match status" value="1"/>
</dbReference>
<feature type="chain" id="PRO_1000001531" description="Recombination protein RecR">
    <location>
        <begin position="1"/>
        <end position="198"/>
    </location>
</feature>
<feature type="domain" description="Toprim" evidence="1">
    <location>
        <begin position="81"/>
        <end position="175"/>
    </location>
</feature>
<feature type="zinc finger region" description="C4-type" evidence="1">
    <location>
        <begin position="58"/>
        <end position="73"/>
    </location>
</feature>
<comment type="function">
    <text evidence="1">May play a role in DNA repair. It seems to be involved in an RecBC-independent recombinational process of DNA repair. It may act with RecF and RecO.</text>
</comment>
<comment type="similarity">
    <text evidence="1">Belongs to the RecR family.</text>
</comment>
<reference key="1">
    <citation type="journal article" date="2006" name="Genome Res.">
        <title>Skewed genomic variability in strains of the toxigenic bacterial pathogen, Clostridium perfringens.</title>
        <authorList>
            <person name="Myers G.S.A."/>
            <person name="Rasko D.A."/>
            <person name="Cheung J.K."/>
            <person name="Ravel J."/>
            <person name="Seshadri R."/>
            <person name="DeBoy R.T."/>
            <person name="Ren Q."/>
            <person name="Varga J."/>
            <person name="Awad M.M."/>
            <person name="Brinkac L.M."/>
            <person name="Daugherty S.C."/>
            <person name="Haft D.H."/>
            <person name="Dodson R.J."/>
            <person name="Madupu R."/>
            <person name="Nelson W.C."/>
            <person name="Rosovitz M.J."/>
            <person name="Sullivan S.A."/>
            <person name="Khouri H."/>
            <person name="Dimitrov G.I."/>
            <person name="Watkins K.L."/>
            <person name="Mulligan S."/>
            <person name="Benton J."/>
            <person name="Radune D."/>
            <person name="Fisher D.J."/>
            <person name="Atkins H.S."/>
            <person name="Hiscox T."/>
            <person name="Jost B.H."/>
            <person name="Billington S.J."/>
            <person name="Songer J.G."/>
            <person name="McClane B.A."/>
            <person name="Titball R.W."/>
            <person name="Rood J.I."/>
            <person name="Melville S.B."/>
            <person name="Paulsen I.T."/>
        </authorList>
    </citation>
    <scope>NUCLEOTIDE SEQUENCE [LARGE SCALE GENOMIC DNA]</scope>
    <source>
        <strain>ATCC 13124 / DSM 756 / JCM 1290 / NCIMB 6125 / NCTC 8237 / S 107 / Type A</strain>
    </source>
</reference>
<sequence>MEFYPVAIEKLIEEFAKLPSIGKKSAQRLTLHILNLPKDEVEEFANALVKARGTIKYCSVCGNFTDTDPCAICSNPNREKDIICVVEQPKDIMTMEKVKEFNGLYHVLHGTISPMQGRGPQDIRIRELVARMSGDVKEVIVATNPTIEGEATAMYISKILKPLDVKVTRIAAGIPVGGDLEYADEVTLSKALEGRTVI</sequence>
<evidence type="ECO:0000255" key="1">
    <source>
        <dbReference type="HAMAP-Rule" id="MF_00017"/>
    </source>
</evidence>
<name>RECR_CLOP1</name>
<organism>
    <name type="scientific">Clostridium perfringens (strain ATCC 13124 / DSM 756 / JCM 1290 / NCIMB 6125 / NCTC 8237 / Type A)</name>
    <dbReference type="NCBI Taxonomy" id="195103"/>
    <lineage>
        <taxon>Bacteria</taxon>
        <taxon>Bacillati</taxon>
        <taxon>Bacillota</taxon>
        <taxon>Clostridia</taxon>
        <taxon>Eubacteriales</taxon>
        <taxon>Clostridiaceae</taxon>
        <taxon>Clostridium</taxon>
    </lineage>
</organism>
<proteinExistence type="inferred from homology"/>
<keyword id="KW-0227">DNA damage</keyword>
<keyword id="KW-0233">DNA recombination</keyword>
<keyword id="KW-0234">DNA repair</keyword>
<keyword id="KW-0479">Metal-binding</keyword>
<keyword id="KW-0862">Zinc</keyword>
<keyword id="KW-0863">Zinc-finger</keyword>
<gene>
    <name evidence="1" type="primary">recR</name>
    <name type="ordered locus">CPF_0054</name>
</gene>
<accession>Q0TV20</accession>